<feature type="chain" id="PRO_0000125992" description="17.9 kDa class II heat shock protein">
    <location>
        <begin position="1"/>
        <end position="160"/>
    </location>
</feature>
<feature type="domain" description="sHSP" evidence="1">
    <location>
        <begin position="44"/>
        <end position="160"/>
    </location>
</feature>
<gene>
    <name type="primary">HSP17.9</name>
</gene>
<proteinExistence type="evidence at transcript level"/>
<accession>P46516</accession>
<name>HSP21_HELAN</name>
<reference key="1">
    <citation type="journal article" date="1994" name="Plant Mol. Biol.">
        <title>Expression of sunflower low-molecular-weight heat-shock proteins during embryogenesis and persistence after germination: localization and possible functional implications.</title>
        <authorList>
            <person name="Coca M.A."/>
            <person name="Almoguera C."/>
            <person name="Jordano J."/>
        </authorList>
    </citation>
    <scope>NUCLEOTIDE SEQUENCE [MRNA]</scope>
    <source>
        <strain>cv. Sunweed</strain>
        <tissue>Seed</tissue>
    </source>
</reference>
<reference key="2">
    <citation type="journal article" date="1993" name="Plant J.">
        <title>Tissue-specific expression of sunflower heat shock proteins in response to water stress.</title>
        <authorList>
            <person name="Almoguera C."/>
            <person name="Coca M.A."/>
            <person name="Jordano J."/>
        </authorList>
    </citation>
    <scope>NUCLEOTIDE SEQUENCE [MRNA]</scope>
    <source>
        <strain>cv. Sunweed</strain>
        <tissue>Seed</tissue>
    </source>
</reference>
<dbReference type="EMBL" id="Z29554">
    <property type="protein sequence ID" value="CAA82653.1"/>
    <property type="molecule type" value="mRNA"/>
</dbReference>
<dbReference type="PIR" id="S46310">
    <property type="entry name" value="S46310"/>
</dbReference>
<dbReference type="SMR" id="P46516"/>
<dbReference type="PhylomeDB" id="P46516"/>
<dbReference type="GO" id="GO:0005737">
    <property type="term" value="C:cytoplasm"/>
    <property type="evidence" value="ECO:0007669"/>
    <property type="project" value="UniProtKB-SubCell"/>
</dbReference>
<dbReference type="FunFam" id="2.60.40.790:FF:000010">
    <property type="entry name" value="17.3 kDa class II heat shock protein-like"/>
    <property type="match status" value="1"/>
</dbReference>
<dbReference type="Gene3D" id="2.60.40.790">
    <property type="match status" value="1"/>
</dbReference>
<dbReference type="InterPro" id="IPR002068">
    <property type="entry name" value="A-crystallin/Hsp20_dom"/>
</dbReference>
<dbReference type="InterPro" id="IPR008978">
    <property type="entry name" value="HSP20-like_chaperone"/>
</dbReference>
<dbReference type="InterPro" id="IPR031107">
    <property type="entry name" value="Small_HSP"/>
</dbReference>
<dbReference type="PANTHER" id="PTHR11527">
    <property type="entry name" value="HEAT-SHOCK PROTEIN 20 FAMILY MEMBER"/>
    <property type="match status" value="1"/>
</dbReference>
<dbReference type="Pfam" id="PF00011">
    <property type="entry name" value="HSP20"/>
    <property type="match status" value="1"/>
</dbReference>
<dbReference type="SUPFAM" id="SSF49764">
    <property type="entry name" value="HSP20-like chaperones"/>
    <property type="match status" value="1"/>
</dbReference>
<dbReference type="PROSITE" id="PS01031">
    <property type="entry name" value="SHSP"/>
    <property type="match status" value="1"/>
</dbReference>
<protein>
    <recommendedName>
        <fullName>17.9 kDa class II heat shock protein</fullName>
    </recommendedName>
</protein>
<comment type="subcellular location">
    <subcellularLocation>
        <location evidence="2">Cytoplasm</location>
    </subcellularLocation>
</comment>
<comment type="similarity">
    <text evidence="1">Belongs to the small heat shock protein (HSP20) family.</text>
</comment>
<keyword id="KW-0963">Cytoplasm</keyword>
<keyword id="KW-0346">Stress response</keyword>
<sequence length="160" mass="17855">MDIDSLMGFDPLLRNLHYILEATDDNTTGNKSNNSGPSRAYVRDARAMAATPADVKECPNSYVFIVDMPGLKSGDIKVQVERDNVLVISGKRNREEEKEGVKYVRMERRMGKFMKKFALPEDANTDKISAICQDGVLTVTVEKLPPPEPKKPKTIQVQVA</sequence>
<evidence type="ECO:0000255" key="1">
    <source>
        <dbReference type="PROSITE-ProRule" id="PRU00285"/>
    </source>
</evidence>
<evidence type="ECO:0000305" key="2"/>
<organism>
    <name type="scientific">Helianthus annuus</name>
    <name type="common">Common sunflower</name>
    <dbReference type="NCBI Taxonomy" id="4232"/>
    <lineage>
        <taxon>Eukaryota</taxon>
        <taxon>Viridiplantae</taxon>
        <taxon>Streptophyta</taxon>
        <taxon>Embryophyta</taxon>
        <taxon>Tracheophyta</taxon>
        <taxon>Spermatophyta</taxon>
        <taxon>Magnoliopsida</taxon>
        <taxon>eudicotyledons</taxon>
        <taxon>Gunneridae</taxon>
        <taxon>Pentapetalae</taxon>
        <taxon>asterids</taxon>
        <taxon>campanulids</taxon>
        <taxon>Asterales</taxon>
        <taxon>Asteraceae</taxon>
        <taxon>Asteroideae</taxon>
        <taxon>Heliantheae alliance</taxon>
        <taxon>Heliantheae</taxon>
        <taxon>Helianthus</taxon>
    </lineage>
</organism>